<sequence length="303" mass="34060">MFGKKNLKWLGVVATLMMTFVQLGGALVTKTGSADGCGSSWPLCHGALIPEFFPIDTIIELSHRAVSALSLLMVLWLVITAWKHIGYIKEIKPLSIISVGFLLLQALIGAAAVIWQQNDYVLALHFGISLISFSSVFLITLIIFSIDQKYEADELYIKKPLRRLTWLMAIIIYCGVYTGALVRHADASLAYGGWPLPFHDLVPHSEQDWVQLTHRIMAFIVFTIIMITYIHAVKNYPNNRTVHYGYTAAFILVILQVITGALSIMTNVNLIIALFHALFITYLFGMTTYFIMLMLRSVRSDKQ</sequence>
<organism>
    <name type="scientific">Staphylococcus aureus (strain JH1)</name>
    <dbReference type="NCBI Taxonomy" id="359787"/>
    <lineage>
        <taxon>Bacteria</taxon>
        <taxon>Bacillati</taxon>
        <taxon>Bacillota</taxon>
        <taxon>Bacilli</taxon>
        <taxon>Bacillales</taxon>
        <taxon>Staphylococcaceae</taxon>
        <taxon>Staphylococcus</taxon>
    </lineage>
</organism>
<protein>
    <recommendedName>
        <fullName evidence="1">Heme A synthase</fullName>
        <shortName evidence="1">HAS</shortName>
        <ecNumber evidence="1">1.17.99.9</ecNumber>
    </recommendedName>
    <alternativeName>
        <fullName evidence="1">Cytochrome aa3-controlling protein</fullName>
    </alternativeName>
</protein>
<proteinExistence type="inferred from homology"/>
<keyword id="KW-1003">Cell membrane</keyword>
<keyword id="KW-1015">Disulfide bond</keyword>
<keyword id="KW-0350">Heme biosynthesis</keyword>
<keyword id="KW-0408">Iron</keyword>
<keyword id="KW-0472">Membrane</keyword>
<keyword id="KW-0479">Metal-binding</keyword>
<keyword id="KW-0560">Oxidoreductase</keyword>
<keyword id="KW-0812">Transmembrane</keyword>
<keyword id="KW-1133">Transmembrane helix</keyword>
<feature type="chain" id="PRO_0000348989" description="Heme A synthase">
    <location>
        <begin position="1"/>
        <end position="303"/>
    </location>
</feature>
<feature type="topological domain" description="Cytoplasmic" evidence="1">
    <location>
        <begin position="1"/>
        <end position="8"/>
    </location>
</feature>
<feature type="transmembrane region" description="Helical" evidence="1">
    <location>
        <begin position="9"/>
        <end position="29"/>
    </location>
</feature>
<feature type="topological domain" description="Extracellular" evidence="1">
    <location>
        <begin position="30"/>
        <end position="67"/>
    </location>
</feature>
<feature type="transmembrane region" description="Helical" evidence="1">
    <location>
        <begin position="68"/>
        <end position="88"/>
    </location>
</feature>
<feature type="topological domain" description="Cytoplasmic" evidence="1">
    <location>
        <begin position="89"/>
        <end position="93"/>
    </location>
</feature>
<feature type="transmembrane region" description="Helical" evidence="1">
    <location>
        <begin position="94"/>
        <end position="114"/>
    </location>
</feature>
<feature type="topological domain" description="Extracellular" evidence="1">
    <location>
        <begin position="115"/>
        <end position="125"/>
    </location>
</feature>
<feature type="transmembrane region" description="Helical" evidence="1">
    <location>
        <begin position="126"/>
        <end position="146"/>
    </location>
</feature>
<feature type="topological domain" description="Cytoplasmic" evidence="1">
    <location>
        <begin position="147"/>
        <end position="163"/>
    </location>
</feature>
<feature type="transmembrane region" description="Helical" evidence="1">
    <location>
        <begin position="164"/>
        <end position="184"/>
    </location>
</feature>
<feature type="topological domain" description="Extracellular" evidence="1">
    <location>
        <begin position="185"/>
        <end position="215"/>
    </location>
</feature>
<feature type="transmembrane region" description="Helical" evidence="1">
    <location>
        <begin position="216"/>
        <end position="236"/>
    </location>
</feature>
<feature type="topological domain" description="Cytoplasmic" evidence="1">
    <location>
        <begin position="237"/>
        <end position="244"/>
    </location>
</feature>
<feature type="transmembrane region" description="Helical" evidence="1">
    <location>
        <begin position="245"/>
        <end position="265"/>
    </location>
</feature>
<feature type="topological domain" description="Extracellular" evidence="1">
    <location>
        <begin position="266"/>
        <end position="270"/>
    </location>
</feature>
<feature type="transmembrane region" description="Helical" evidence="1">
    <location>
        <begin position="271"/>
        <end position="291"/>
    </location>
</feature>
<feature type="topological domain" description="Cytoplasmic" evidence="1">
    <location>
        <begin position="292"/>
        <end position="303"/>
    </location>
</feature>
<feature type="active site" evidence="1">
    <location>
        <position position="60"/>
    </location>
</feature>
<feature type="binding site" description="axial binding residue" evidence="1">
    <location>
        <position position="63"/>
    </location>
    <ligand>
        <name>heme o</name>
        <dbReference type="ChEBI" id="CHEBI:24480"/>
    </ligand>
    <ligandPart>
        <name>Fe</name>
        <dbReference type="ChEBI" id="CHEBI:18248"/>
    </ligandPart>
</feature>
<feature type="binding site" description="axial binding residue" evidence="1">
    <location>
        <position position="125"/>
    </location>
    <ligand>
        <name>heme o</name>
        <dbReference type="ChEBI" id="CHEBI:24480"/>
    </ligand>
    <ligandPart>
        <name>Fe</name>
        <dbReference type="ChEBI" id="CHEBI:18248"/>
    </ligandPart>
</feature>
<feature type="binding site" description="axial binding residue" evidence="1">
    <location>
        <position position="214"/>
    </location>
    <ligand>
        <name>heme b</name>
        <dbReference type="ChEBI" id="CHEBI:60344"/>
    </ligand>
    <ligandPart>
        <name>Fe</name>
        <dbReference type="ChEBI" id="CHEBI:18248"/>
    </ligandPart>
</feature>
<feature type="binding site" description="axial binding residue" evidence="1">
    <location>
        <position position="276"/>
    </location>
    <ligand>
        <name>heme b</name>
        <dbReference type="ChEBI" id="CHEBI:60344"/>
    </ligand>
    <ligandPart>
        <name>Fe</name>
        <dbReference type="ChEBI" id="CHEBI:18248"/>
    </ligandPart>
</feature>
<feature type="disulfide bond" description="Essential for catalytic activity" evidence="1">
    <location>
        <begin position="37"/>
        <end position="44"/>
    </location>
</feature>
<dbReference type="EC" id="1.17.99.9" evidence="1"/>
<dbReference type="EMBL" id="CP000736">
    <property type="protein sequence ID" value="ABR52051.1"/>
    <property type="status" value="ALT_INIT"/>
    <property type="molecule type" value="Genomic_DNA"/>
</dbReference>
<dbReference type="SMR" id="A6U0T3"/>
<dbReference type="KEGG" id="sah:SaurJH1_1197"/>
<dbReference type="HOGENOM" id="CLU_041525_3_1_9"/>
<dbReference type="UniPathway" id="UPA00269">
    <property type="reaction ID" value="UER00713"/>
</dbReference>
<dbReference type="GO" id="GO:0005886">
    <property type="term" value="C:plasma membrane"/>
    <property type="evidence" value="ECO:0007669"/>
    <property type="project" value="UniProtKB-SubCell"/>
</dbReference>
<dbReference type="GO" id="GO:0046872">
    <property type="term" value="F:metal ion binding"/>
    <property type="evidence" value="ECO:0007669"/>
    <property type="project" value="UniProtKB-KW"/>
</dbReference>
<dbReference type="GO" id="GO:0016653">
    <property type="term" value="F:oxidoreductase activity, acting on NAD(P)H, heme protein as acceptor"/>
    <property type="evidence" value="ECO:0007669"/>
    <property type="project" value="InterPro"/>
</dbReference>
<dbReference type="GO" id="GO:0006784">
    <property type="term" value="P:heme A biosynthetic process"/>
    <property type="evidence" value="ECO:0007669"/>
    <property type="project" value="UniProtKB-UniRule"/>
</dbReference>
<dbReference type="HAMAP" id="MF_01664">
    <property type="entry name" value="HemeA_synth_type1"/>
    <property type="match status" value="1"/>
</dbReference>
<dbReference type="InterPro" id="IPR003780">
    <property type="entry name" value="COX15/CtaA_fam"/>
</dbReference>
<dbReference type="InterPro" id="IPR050450">
    <property type="entry name" value="COX15/CtaA_HemeA_synthase"/>
</dbReference>
<dbReference type="InterPro" id="IPR023755">
    <property type="entry name" value="HemeA_Synthase_type1"/>
</dbReference>
<dbReference type="PANTHER" id="PTHR35457">
    <property type="entry name" value="HEME A SYNTHASE"/>
    <property type="match status" value="1"/>
</dbReference>
<dbReference type="PANTHER" id="PTHR35457:SF1">
    <property type="entry name" value="HEME A SYNTHASE"/>
    <property type="match status" value="1"/>
</dbReference>
<dbReference type="Pfam" id="PF02628">
    <property type="entry name" value="COX15-CtaA"/>
    <property type="match status" value="1"/>
</dbReference>
<accession>A6U0T3</accession>
<comment type="function">
    <text evidence="1">Catalyzes the conversion of heme O to heme A by two successive hydroxylations of the methyl group at C8. The first hydroxylation forms heme I, the second hydroxylation results in an unstable dihydroxymethyl group, which spontaneously dehydrates, resulting in the formyl group of heme A.</text>
</comment>
<comment type="catalytic activity">
    <reaction evidence="1">
        <text>Fe(II)-heme o + 2 A + H2O = Fe(II)-heme a + 2 AH2</text>
        <dbReference type="Rhea" id="RHEA:63388"/>
        <dbReference type="ChEBI" id="CHEBI:13193"/>
        <dbReference type="ChEBI" id="CHEBI:15377"/>
        <dbReference type="ChEBI" id="CHEBI:17499"/>
        <dbReference type="ChEBI" id="CHEBI:60530"/>
        <dbReference type="ChEBI" id="CHEBI:61715"/>
        <dbReference type="EC" id="1.17.99.9"/>
    </reaction>
    <physiologicalReaction direction="left-to-right" evidence="1">
        <dbReference type="Rhea" id="RHEA:63389"/>
    </physiologicalReaction>
</comment>
<comment type="cofactor">
    <cofactor evidence="1">
        <name>heme b</name>
        <dbReference type="ChEBI" id="CHEBI:60344"/>
    </cofactor>
</comment>
<comment type="pathway">
    <text evidence="1">Porphyrin-containing compound metabolism; heme A biosynthesis; heme A from heme O: step 1/1.</text>
</comment>
<comment type="subunit">
    <text evidence="1">Interacts with CtaB.</text>
</comment>
<comment type="subcellular location">
    <subcellularLocation>
        <location evidence="1">Cell membrane</location>
        <topology evidence="1">Multi-pass membrane protein</topology>
    </subcellularLocation>
</comment>
<comment type="domain">
    <text evidence="1">The N-half (TM1-TM4) and C-half (TM5-TM8) domains are connected by an intracellular loop. Each domain is formed from four-helix bundles and they align in a pseudo twofold symmetry manner. The N-half domain is the substrate-heme O binding domain and the C-half domain is the cofactor heme B binding domain.</text>
</comment>
<comment type="domain">
    <text evidence="1">The cysteines of disulfide bond Cys-37 and Cys-44 may be involved in transfer of reducing equivalents from quinol in the membrane to the active site of the enzyme.</text>
</comment>
<comment type="similarity">
    <text evidence="1">Belongs to the COX15/CtaA family. Type 1 subfamily.</text>
</comment>
<comment type="sequence caution" evidence="2">
    <conflict type="erroneous initiation">
        <sequence resource="EMBL-CDS" id="ABR52051"/>
    </conflict>
</comment>
<name>CTAA_STAA2</name>
<evidence type="ECO:0000255" key="1">
    <source>
        <dbReference type="HAMAP-Rule" id="MF_01664"/>
    </source>
</evidence>
<evidence type="ECO:0000305" key="2"/>
<reference key="1">
    <citation type="submission" date="2007-06" db="EMBL/GenBank/DDBJ databases">
        <title>Complete sequence of chromosome of Staphylococcus aureus subsp. aureus JH1.</title>
        <authorList>
            <consortium name="US DOE Joint Genome Institute"/>
            <person name="Copeland A."/>
            <person name="Lucas S."/>
            <person name="Lapidus A."/>
            <person name="Barry K."/>
            <person name="Detter J.C."/>
            <person name="Glavina del Rio T."/>
            <person name="Hammon N."/>
            <person name="Israni S."/>
            <person name="Dalin E."/>
            <person name="Tice H."/>
            <person name="Pitluck S."/>
            <person name="Chain P."/>
            <person name="Malfatti S."/>
            <person name="Shin M."/>
            <person name="Vergez L."/>
            <person name="Schmutz J."/>
            <person name="Larimer F."/>
            <person name="Land M."/>
            <person name="Hauser L."/>
            <person name="Kyrpides N."/>
            <person name="Ivanova N."/>
            <person name="Tomasz A."/>
            <person name="Richardson P."/>
        </authorList>
    </citation>
    <scope>NUCLEOTIDE SEQUENCE [LARGE SCALE GENOMIC DNA]</scope>
    <source>
        <strain>JH1</strain>
    </source>
</reference>
<gene>
    <name evidence="1" type="primary">ctaA</name>
    <name type="ordered locus">SaurJH1_1197</name>
</gene>